<protein>
    <recommendedName>
        <fullName>Thrombopoietin</fullName>
    </recommendedName>
    <alternativeName>
        <fullName>C-MPL ligand</fullName>
        <shortName>ML</shortName>
    </alternativeName>
    <alternativeName>
        <fullName>Megakaryocyte colony-stimulating factor</fullName>
    </alternativeName>
    <alternativeName>
        <fullName>Megakaryocyte growth and development factor</fullName>
        <shortName>MGDF</shortName>
    </alternativeName>
</protein>
<reference key="1">
    <citation type="journal article" date="1994" name="Cell">
        <title>Identification and cloning of a megakaryocyte growth and development factor that is a ligand for the cytokine receptor Mpl.</title>
        <authorList>
            <person name="Bartley T.D."/>
            <person name="Bogenberger J."/>
            <person name="Hunt P."/>
            <person name="Li Y.-S."/>
            <person name="Lu H.S."/>
            <person name="Martin F."/>
            <person name="Chang M.-S."/>
            <person name="Samal B.B."/>
            <person name="Nichol J.L."/>
            <person name="Swift S."/>
            <person name="Johnson M.J."/>
            <person name="Hsu R.-Y."/>
            <person name="Parker V.P."/>
            <person name="Suggs S."/>
            <person name="Skrine J.D."/>
            <person name="Merewether L.A."/>
            <person name="Clogson C."/>
            <person name="Hsu E."/>
            <person name="Hokom M.M."/>
            <person name="Hornkohl A."/>
            <person name="Choi E."/>
            <person name="Pangelinan M."/>
            <person name="Sun Y."/>
            <person name="Mar V."/>
            <person name="McNich J."/>
            <person name="Simonet L."/>
            <person name="Jacobsen F."/>
            <person name="Xie C."/>
            <person name="Shutter J."/>
            <person name="Chute H."/>
            <person name="Basu R."/>
            <person name="Selander L."/>
            <person name="Trollinger D."/>
            <person name="Sieu L."/>
            <person name="Padilla D."/>
            <person name="Trail G."/>
            <person name="Elliott G."/>
            <person name="Izumi R."/>
            <person name="Covey T."/>
            <person name="Crouse J."/>
            <person name="Garcia A."/>
            <person name="Xu W."/>
            <person name="del Castillo J."/>
            <person name="Biron J."/>
            <person name="Cole S."/>
            <person name="Hu M.C.-T."/>
            <person name="Pacifici R."/>
            <person name="Ponting I."/>
            <person name="Saris C."/>
            <person name="Wen D."/>
            <person name="Yung Y.P."/>
            <person name="Lin H."/>
            <person name="Bosselman R.A."/>
        </authorList>
    </citation>
    <scope>NUCLEOTIDE SEQUENCE</scope>
    <scope>PROTEIN SEQUENCE OF 24-44</scope>
    <source>
        <tissue>Kidney</tissue>
    </source>
</reference>
<evidence type="ECO:0000255" key="1"/>
<evidence type="ECO:0000256" key="2">
    <source>
        <dbReference type="SAM" id="MobiDB-lite"/>
    </source>
</evidence>
<evidence type="ECO:0000269" key="3">
    <source>
    </source>
</evidence>
<evidence type="ECO:0000305" key="4"/>
<sequence length="352" mass="37642">MELTELLLVVMLLLTARLDPCLPAPPACDPRLLNKMLRDSHVLHSRLSQCPDIYPLSTPVLLPAVDFSLGEWKTQKEQTKAQDVWGAVALLLDGVLAARGQLGPSCLSSLLGQLSGQVRLLLGALQGLLGTQLPPQGRTTTHKDPNAIFLSFQQLLRGKVRFLLLVAGPTLCAKQSQPTTAVPTNTSLFLTLRKLPNRTSGLLETNSSISARTTGSGLLKRLQGFRAKIPGLLNQTSRSLNQTPGHLSRTHGPLNGTHGLLPGLSLTALGAPDIPPGTSDMDALPPNLWPRYSPSPIHPPPGQYTLFSPLPTSPTPQNPLQPPPPDPSATANSTSPLLIAAHPHFQNLSQEE</sequence>
<accession>P42705</accession>
<keyword id="KW-0202">Cytokine</keyword>
<keyword id="KW-0903">Direct protein sequencing</keyword>
<keyword id="KW-1015">Disulfide bond</keyword>
<keyword id="KW-0325">Glycoprotein</keyword>
<keyword id="KW-0372">Hormone</keyword>
<keyword id="KW-1185">Reference proteome</keyword>
<keyword id="KW-0964">Secreted</keyword>
<keyword id="KW-0732">Signal</keyword>
<dbReference type="SMR" id="P42705"/>
<dbReference type="STRING" id="9615.ENSCAFP00000066649"/>
<dbReference type="GlyCosmos" id="P42705">
    <property type="glycosylation" value="7 sites, No reported glycans"/>
</dbReference>
<dbReference type="PaxDb" id="9615-ENSCAFP00000066649"/>
<dbReference type="InParanoid" id="P42705"/>
<dbReference type="OrthoDB" id="9892121at2759"/>
<dbReference type="Proteomes" id="UP000002254">
    <property type="component" value="Unplaced"/>
</dbReference>
<dbReference type="Proteomes" id="UP000694429">
    <property type="component" value="Unplaced"/>
</dbReference>
<dbReference type="Proteomes" id="UP000694542">
    <property type="component" value="Unplaced"/>
</dbReference>
<dbReference type="Proteomes" id="UP000805418">
    <property type="component" value="Unplaced"/>
</dbReference>
<dbReference type="GO" id="GO:0005576">
    <property type="term" value="C:extracellular region"/>
    <property type="evidence" value="ECO:0000318"/>
    <property type="project" value="GO_Central"/>
</dbReference>
<dbReference type="GO" id="GO:0005615">
    <property type="term" value="C:extracellular space"/>
    <property type="evidence" value="ECO:0007669"/>
    <property type="project" value="UniProtKB-KW"/>
</dbReference>
<dbReference type="GO" id="GO:0005125">
    <property type="term" value="F:cytokine activity"/>
    <property type="evidence" value="ECO:0007669"/>
    <property type="project" value="UniProtKB-KW"/>
</dbReference>
<dbReference type="GO" id="GO:0005179">
    <property type="term" value="F:hormone activity"/>
    <property type="evidence" value="ECO:0007669"/>
    <property type="project" value="UniProtKB-KW"/>
</dbReference>
<dbReference type="GO" id="GO:0005102">
    <property type="term" value="F:signaling receptor binding"/>
    <property type="evidence" value="ECO:0000318"/>
    <property type="project" value="GO_Central"/>
</dbReference>
<dbReference type="GO" id="GO:0008283">
    <property type="term" value="P:cell population proliferation"/>
    <property type="evidence" value="ECO:0007669"/>
    <property type="project" value="InterPro"/>
</dbReference>
<dbReference type="GO" id="GO:0070374">
    <property type="term" value="P:positive regulation of ERK1 and ERK2 cascade"/>
    <property type="evidence" value="ECO:0000250"/>
    <property type="project" value="UniProtKB"/>
</dbReference>
<dbReference type="GO" id="GO:1902035">
    <property type="term" value="P:positive regulation of hematopoietic stem cell proliferation"/>
    <property type="evidence" value="ECO:0000318"/>
    <property type="project" value="GO_Central"/>
</dbReference>
<dbReference type="GO" id="GO:0045654">
    <property type="term" value="P:positive regulation of megakaryocyte differentiation"/>
    <property type="evidence" value="ECO:0000250"/>
    <property type="project" value="UniProtKB"/>
</dbReference>
<dbReference type="GO" id="GO:0051897">
    <property type="term" value="P:positive regulation of phosphatidylinositol 3-kinase/protein kinase B signal transduction"/>
    <property type="evidence" value="ECO:0000250"/>
    <property type="project" value="UniProtKB"/>
</dbReference>
<dbReference type="GO" id="GO:0001934">
    <property type="term" value="P:positive regulation of protein phosphorylation"/>
    <property type="evidence" value="ECO:0000250"/>
    <property type="project" value="UniProtKB"/>
</dbReference>
<dbReference type="GO" id="GO:0038163">
    <property type="term" value="P:thrombopoietin-mediated signaling pathway"/>
    <property type="evidence" value="ECO:0000250"/>
    <property type="project" value="UniProtKB"/>
</dbReference>
<dbReference type="FunFam" id="1.20.1250.10:FF:000015">
    <property type="entry name" value="thrombopoietin isoform X2"/>
    <property type="match status" value="1"/>
</dbReference>
<dbReference type="Gene3D" id="1.20.1250.10">
    <property type="match status" value="1"/>
</dbReference>
<dbReference type="InterPro" id="IPR009079">
    <property type="entry name" value="4_helix_cytokine-like_core"/>
</dbReference>
<dbReference type="InterPro" id="IPR019767">
    <property type="entry name" value="EPO/TPO_CS"/>
</dbReference>
<dbReference type="InterPro" id="IPR001323">
    <property type="entry name" value="EPO_TPO"/>
</dbReference>
<dbReference type="InterPro" id="IPR003978">
    <property type="entry name" value="Thrombopoietin"/>
</dbReference>
<dbReference type="PANTHER" id="PTHR10560">
    <property type="entry name" value="THROMBOPOIETIN"/>
    <property type="match status" value="1"/>
</dbReference>
<dbReference type="PANTHER" id="PTHR10560:SF0">
    <property type="entry name" value="THROMBOPOIETIN"/>
    <property type="match status" value="1"/>
</dbReference>
<dbReference type="Pfam" id="PF00758">
    <property type="entry name" value="EPO_TPO"/>
    <property type="match status" value="1"/>
</dbReference>
<dbReference type="PRINTS" id="PR01485">
    <property type="entry name" value="THROMBOPTN"/>
</dbReference>
<dbReference type="SUPFAM" id="SSF47266">
    <property type="entry name" value="4-helical cytokines"/>
    <property type="match status" value="1"/>
</dbReference>
<dbReference type="PROSITE" id="PS00817">
    <property type="entry name" value="EPO_TPO"/>
    <property type="match status" value="1"/>
</dbReference>
<feature type="signal peptide" evidence="3">
    <location>
        <begin position="1"/>
        <end position="23"/>
    </location>
</feature>
<feature type="chain" id="PRO_0000008410" description="Thrombopoietin">
    <location>
        <begin position="24"/>
        <end position="352"/>
    </location>
</feature>
<feature type="region of interest" description="Disordered" evidence="2">
    <location>
        <begin position="233"/>
        <end position="259"/>
    </location>
</feature>
<feature type="region of interest" description="Disordered" evidence="2">
    <location>
        <begin position="292"/>
        <end position="352"/>
    </location>
</feature>
<feature type="compositionally biased region" description="Polar residues" evidence="2">
    <location>
        <begin position="233"/>
        <end position="245"/>
    </location>
</feature>
<feature type="compositionally biased region" description="Pro residues" evidence="2">
    <location>
        <begin position="311"/>
        <end position="327"/>
    </location>
</feature>
<feature type="glycosylation site" description="N-linked (GlcNAc...) asparagine" evidence="1">
    <location>
        <position position="185"/>
    </location>
</feature>
<feature type="glycosylation site" description="N-linked (GlcNAc...) asparagine" evidence="1">
    <location>
        <position position="197"/>
    </location>
</feature>
<feature type="glycosylation site" description="N-linked (GlcNAc...) asparagine" evidence="1">
    <location>
        <position position="206"/>
    </location>
</feature>
<feature type="glycosylation site" description="N-linked (GlcNAc...) asparagine" evidence="1">
    <location>
        <position position="234"/>
    </location>
</feature>
<feature type="glycosylation site" description="N-linked (GlcNAc...) asparagine" evidence="1">
    <location>
        <position position="255"/>
    </location>
</feature>
<feature type="glycosylation site" description="N-linked (GlcNAc...) asparagine" evidence="1">
    <location>
        <position position="332"/>
    </location>
</feature>
<feature type="glycosylation site" description="N-linked (GlcNAc...) asparagine" evidence="1">
    <location>
        <position position="347"/>
    </location>
</feature>
<feature type="disulfide bond" evidence="1">
    <location>
        <begin position="28"/>
        <end position="172"/>
    </location>
</feature>
<feature type="disulfide bond" evidence="1">
    <location>
        <begin position="50"/>
        <end position="106"/>
    </location>
</feature>
<name>TPO_CANLF</name>
<organism>
    <name type="scientific">Canis lupus familiaris</name>
    <name type="common">Dog</name>
    <name type="synonym">Canis familiaris</name>
    <dbReference type="NCBI Taxonomy" id="9615"/>
    <lineage>
        <taxon>Eukaryota</taxon>
        <taxon>Metazoa</taxon>
        <taxon>Chordata</taxon>
        <taxon>Craniata</taxon>
        <taxon>Vertebrata</taxon>
        <taxon>Euteleostomi</taxon>
        <taxon>Mammalia</taxon>
        <taxon>Eutheria</taxon>
        <taxon>Laurasiatheria</taxon>
        <taxon>Carnivora</taxon>
        <taxon>Caniformia</taxon>
        <taxon>Canidae</taxon>
        <taxon>Canis</taxon>
    </lineage>
</organism>
<gene>
    <name type="primary">THPO</name>
    <name type="synonym">TPO</name>
</gene>
<proteinExistence type="evidence at protein level"/>
<comment type="function">
    <text>Lineage-specific cytokine affecting the proliferation and maturation of megakaryocytes from their committed progenitor cells. It acts at a late stage of megakaryocyte development. It may be the major physiological regulator of circulating platelets.</text>
</comment>
<comment type="subcellular location">
    <subcellularLocation>
        <location>Secreted</location>
    </subcellularLocation>
</comment>
<comment type="domain">
    <text>Two-domain structure with an erythropoietin-like N-terminal and a Ser/Pro/Thr-rich C-terminal.</text>
</comment>
<comment type="similarity">
    <text evidence="4">Belongs to the EPO/TPO family.</text>
</comment>